<dbReference type="EC" id="1.1.1.38" evidence="1"/>
<dbReference type="EMBL" id="AE016795">
    <property type="protein sequence ID" value="AAO11140.1"/>
    <property type="molecule type" value="Genomic_DNA"/>
</dbReference>
<dbReference type="RefSeq" id="WP_011080634.1">
    <property type="nucleotide sequence ID" value="NC_004459.3"/>
</dbReference>
<dbReference type="SMR" id="Q8D911"/>
<dbReference type="KEGG" id="vvu:VV1_2801"/>
<dbReference type="PATRIC" id="fig|196600.6.peg.1449"/>
<dbReference type="HOGENOM" id="CLU_011405_5_2_6"/>
<dbReference type="Proteomes" id="UP000002275">
    <property type="component" value="Chromosome 1"/>
</dbReference>
<dbReference type="GO" id="GO:0005829">
    <property type="term" value="C:cytosol"/>
    <property type="evidence" value="ECO:0007669"/>
    <property type="project" value="TreeGrafter"/>
</dbReference>
<dbReference type="GO" id="GO:0004471">
    <property type="term" value="F:malate dehydrogenase (decarboxylating) (NAD+) activity"/>
    <property type="evidence" value="ECO:0007669"/>
    <property type="project" value="UniProtKB-UniRule"/>
</dbReference>
<dbReference type="GO" id="GO:0046872">
    <property type="term" value="F:metal ion binding"/>
    <property type="evidence" value="ECO:0007669"/>
    <property type="project" value="UniProtKB-KW"/>
</dbReference>
<dbReference type="GO" id="GO:0051287">
    <property type="term" value="F:NAD binding"/>
    <property type="evidence" value="ECO:0007669"/>
    <property type="project" value="InterPro"/>
</dbReference>
<dbReference type="GO" id="GO:0008948">
    <property type="term" value="F:oxaloacetate decarboxylase activity"/>
    <property type="evidence" value="ECO:0007669"/>
    <property type="project" value="UniProtKB-UniRule"/>
</dbReference>
<dbReference type="GO" id="GO:0006108">
    <property type="term" value="P:malate metabolic process"/>
    <property type="evidence" value="ECO:0007669"/>
    <property type="project" value="TreeGrafter"/>
</dbReference>
<dbReference type="CDD" id="cd05312">
    <property type="entry name" value="NAD_bind_1_malic_enz"/>
    <property type="match status" value="1"/>
</dbReference>
<dbReference type="FunFam" id="3.40.50.10380:FF:000001">
    <property type="entry name" value="NAD-dependent malic enzyme"/>
    <property type="match status" value="1"/>
</dbReference>
<dbReference type="FunFam" id="3.40.50.720:FF:000055">
    <property type="entry name" value="NAD-dependent malic enzyme"/>
    <property type="match status" value="1"/>
</dbReference>
<dbReference type="Gene3D" id="3.40.50.10380">
    <property type="entry name" value="Malic enzyme, N-terminal domain"/>
    <property type="match status" value="1"/>
</dbReference>
<dbReference type="Gene3D" id="3.40.50.720">
    <property type="entry name" value="NAD(P)-binding Rossmann-like Domain"/>
    <property type="match status" value="1"/>
</dbReference>
<dbReference type="HAMAP" id="MF_01619">
    <property type="entry name" value="NAD_malic_enz"/>
    <property type="match status" value="1"/>
</dbReference>
<dbReference type="InterPro" id="IPR046346">
    <property type="entry name" value="Aminoacid_DH-like_N_sf"/>
</dbReference>
<dbReference type="InterPro" id="IPR015884">
    <property type="entry name" value="Malic_enzyme_CS"/>
</dbReference>
<dbReference type="InterPro" id="IPR012301">
    <property type="entry name" value="Malic_N_dom"/>
</dbReference>
<dbReference type="InterPro" id="IPR037062">
    <property type="entry name" value="Malic_N_dom_sf"/>
</dbReference>
<dbReference type="InterPro" id="IPR012302">
    <property type="entry name" value="Malic_NAD-bd"/>
</dbReference>
<dbReference type="InterPro" id="IPR001891">
    <property type="entry name" value="Malic_OxRdtase"/>
</dbReference>
<dbReference type="InterPro" id="IPR036291">
    <property type="entry name" value="NAD(P)-bd_dom_sf"/>
</dbReference>
<dbReference type="InterPro" id="IPR023667">
    <property type="entry name" value="NAD_malic_enz_proteobac"/>
</dbReference>
<dbReference type="NCBIfam" id="NF010052">
    <property type="entry name" value="PRK13529.1"/>
    <property type="match status" value="1"/>
</dbReference>
<dbReference type="PANTHER" id="PTHR23406">
    <property type="entry name" value="MALIC ENZYME-RELATED"/>
    <property type="match status" value="1"/>
</dbReference>
<dbReference type="PANTHER" id="PTHR23406:SF34">
    <property type="entry name" value="NAD-DEPENDENT MALIC ENZYME, MITOCHONDRIAL"/>
    <property type="match status" value="1"/>
</dbReference>
<dbReference type="Pfam" id="PF00390">
    <property type="entry name" value="malic"/>
    <property type="match status" value="1"/>
</dbReference>
<dbReference type="Pfam" id="PF03949">
    <property type="entry name" value="Malic_M"/>
    <property type="match status" value="1"/>
</dbReference>
<dbReference type="PIRSF" id="PIRSF000106">
    <property type="entry name" value="ME"/>
    <property type="match status" value="1"/>
</dbReference>
<dbReference type="PRINTS" id="PR00072">
    <property type="entry name" value="MALOXRDTASE"/>
</dbReference>
<dbReference type="SMART" id="SM01274">
    <property type="entry name" value="malic"/>
    <property type="match status" value="1"/>
</dbReference>
<dbReference type="SMART" id="SM00919">
    <property type="entry name" value="Malic_M"/>
    <property type="match status" value="1"/>
</dbReference>
<dbReference type="SUPFAM" id="SSF53223">
    <property type="entry name" value="Aminoacid dehydrogenase-like, N-terminal domain"/>
    <property type="match status" value="1"/>
</dbReference>
<dbReference type="SUPFAM" id="SSF51735">
    <property type="entry name" value="NAD(P)-binding Rossmann-fold domains"/>
    <property type="match status" value="1"/>
</dbReference>
<dbReference type="PROSITE" id="PS00331">
    <property type="entry name" value="MALIC_ENZYMES"/>
    <property type="match status" value="1"/>
</dbReference>
<sequence length="562" mass="62088">MNNDKRPLYIPFAGPALLSTPLLNKGSAFSAEERISFNLEGLLPETTETIQEQVERAYMQYKAFESDMDKHIYLRNIQDTNETLFYRLVQNHITEMMPIIYTPTVGAACENFSNIYRRGRGLFVSYANRDRIDDILNNASNHNVKVIVVTDGERILGLGDQGIGGMGIPIGKLSLYTACGGISPAYTLPIVLDVGTNNPQRLADPMYMGWRHPRITGADYDAFVEEFIQAVQRRWPDALIQFEDFAQKNAMPLLERYKNRICCFNDDIQGTAAVTVGSLMAACQAAGSKLSEQRITFLGAGSAGCGIAEAIIAQMVSEGISDKKARSQVFMVDRWGLLQEGMPNLLDFQQRLVQKHSVTAKWETEANGFSLLDVVKNAKPTVLIGVSGAPGLFTQEVIQEMHKHCPRPIVFPLSNPTSRVEAVPADIIRWTNGDALVATGSPFDPVIHEGKTYPIVQCNNSYIFPGIGLGVLAVNAKRVTDEMLMESSRALATCSPLAINGKGALLPPLEEIHTVSKRIAYAVAKKAIEQGVALEIADDALQVAIEQHFWQPVYRRYKRTAF</sequence>
<protein>
    <recommendedName>
        <fullName evidence="1">NAD-dependent malic enzyme</fullName>
        <shortName evidence="1">NAD-ME</shortName>
        <ecNumber evidence="1">1.1.1.38</ecNumber>
    </recommendedName>
</protein>
<evidence type="ECO:0000255" key="1">
    <source>
        <dbReference type="HAMAP-Rule" id="MF_01619"/>
    </source>
</evidence>
<feature type="chain" id="PRO_0000160237" description="NAD-dependent malic enzyme">
    <location>
        <begin position="1"/>
        <end position="562"/>
    </location>
</feature>
<feature type="active site" description="Proton donor" evidence="1">
    <location>
        <position position="101"/>
    </location>
</feature>
<feature type="active site" description="Proton acceptor" evidence="1">
    <location>
        <position position="172"/>
    </location>
</feature>
<feature type="binding site" evidence="1">
    <location>
        <position position="154"/>
    </location>
    <ligand>
        <name>NAD(+)</name>
        <dbReference type="ChEBI" id="CHEBI:57540"/>
    </ligand>
</feature>
<feature type="binding site" evidence="1">
    <location>
        <position position="243"/>
    </location>
    <ligand>
        <name>a divalent metal cation</name>
        <dbReference type="ChEBI" id="CHEBI:60240"/>
    </ligand>
</feature>
<feature type="binding site" evidence="1">
    <location>
        <position position="244"/>
    </location>
    <ligand>
        <name>a divalent metal cation</name>
        <dbReference type="ChEBI" id="CHEBI:60240"/>
    </ligand>
</feature>
<feature type="binding site" evidence="1">
    <location>
        <position position="267"/>
    </location>
    <ligand>
        <name>a divalent metal cation</name>
        <dbReference type="ChEBI" id="CHEBI:60240"/>
    </ligand>
</feature>
<feature type="binding site" evidence="1">
    <location>
        <position position="267"/>
    </location>
    <ligand>
        <name>NAD(+)</name>
        <dbReference type="ChEBI" id="CHEBI:57540"/>
    </ligand>
</feature>
<feature type="binding site" evidence="1">
    <location>
        <position position="415"/>
    </location>
    <ligand>
        <name>NAD(+)</name>
        <dbReference type="ChEBI" id="CHEBI:57540"/>
    </ligand>
</feature>
<feature type="site" description="Important for activity" evidence="1">
    <location>
        <position position="267"/>
    </location>
</feature>
<proteinExistence type="inferred from homology"/>
<gene>
    <name evidence="1" type="primary">maeA</name>
    <name type="ordered locus">VV1_2801</name>
</gene>
<keyword id="KW-0479">Metal-binding</keyword>
<keyword id="KW-0520">NAD</keyword>
<keyword id="KW-0560">Oxidoreductase</keyword>
<organism>
    <name type="scientific">Vibrio vulnificus (strain CMCP6)</name>
    <dbReference type="NCBI Taxonomy" id="216895"/>
    <lineage>
        <taxon>Bacteria</taxon>
        <taxon>Pseudomonadati</taxon>
        <taxon>Pseudomonadota</taxon>
        <taxon>Gammaproteobacteria</taxon>
        <taxon>Vibrionales</taxon>
        <taxon>Vibrionaceae</taxon>
        <taxon>Vibrio</taxon>
    </lineage>
</organism>
<reference key="1">
    <citation type="submission" date="2002-12" db="EMBL/GenBank/DDBJ databases">
        <title>Complete genome sequence of Vibrio vulnificus CMCP6.</title>
        <authorList>
            <person name="Rhee J.H."/>
            <person name="Kim S.Y."/>
            <person name="Chung S.S."/>
            <person name="Kim J.J."/>
            <person name="Moon Y.H."/>
            <person name="Jeong H."/>
            <person name="Choy H.E."/>
        </authorList>
    </citation>
    <scope>NUCLEOTIDE SEQUENCE [LARGE SCALE GENOMIC DNA]</scope>
    <source>
        <strain>CMCP6</strain>
    </source>
</reference>
<accession>Q8D911</accession>
<comment type="catalytic activity">
    <reaction evidence="1">
        <text>(S)-malate + NAD(+) = pyruvate + CO2 + NADH</text>
        <dbReference type="Rhea" id="RHEA:12653"/>
        <dbReference type="ChEBI" id="CHEBI:15361"/>
        <dbReference type="ChEBI" id="CHEBI:15589"/>
        <dbReference type="ChEBI" id="CHEBI:16526"/>
        <dbReference type="ChEBI" id="CHEBI:57540"/>
        <dbReference type="ChEBI" id="CHEBI:57945"/>
        <dbReference type="EC" id="1.1.1.38"/>
    </reaction>
</comment>
<comment type="catalytic activity">
    <reaction evidence="1">
        <text>oxaloacetate + H(+) = pyruvate + CO2</text>
        <dbReference type="Rhea" id="RHEA:15641"/>
        <dbReference type="ChEBI" id="CHEBI:15361"/>
        <dbReference type="ChEBI" id="CHEBI:15378"/>
        <dbReference type="ChEBI" id="CHEBI:16452"/>
        <dbReference type="ChEBI" id="CHEBI:16526"/>
        <dbReference type="EC" id="1.1.1.38"/>
    </reaction>
</comment>
<comment type="cofactor">
    <cofactor evidence="1">
        <name>Mg(2+)</name>
        <dbReference type="ChEBI" id="CHEBI:18420"/>
    </cofactor>
    <cofactor evidence="1">
        <name>Mn(2+)</name>
        <dbReference type="ChEBI" id="CHEBI:29035"/>
    </cofactor>
    <text evidence="1">Divalent metal cations. Prefers magnesium or manganese.</text>
</comment>
<comment type="subunit">
    <text evidence="1">Homotetramer.</text>
</comment>
<comment type="similarity">
    <text evidence="1">Belongs to the malic enzymes family.</text>
</comment>
<name>MAO1_VIBVU</name>